<evidence type="ECO:0000255" key="1">
    <source>
        <dbReference type="HAMAP-Rule" id="MF_00344"/>
    </source>
</evidence>
<gene>
    <name evidence="1" type="primary">guaA</name>
    <name type="ordered locus">PAE3369</name>
</gene>
<comment type="function">
    <text evidence="1">Catalyzes the synthesis of GMP from XMP.</text>
</comment>
<comment type="catalytic activity">
    <reaction evidence="1">
        <text>XMP + L-glutamine + ATP + H2O = GMP + L-glutamate + AMP + diphosphate + 2 H(+)</text>
        <dbReference type="Rhea" id="RHEA:11680"/>
        <dbReference type="ChEBI" id="CHEBI:15377"/>
        <dbReference type="ChEBI" id="CHEBI:15378"/>
        <dbReference type="ChEBI" id="CHEBI:29985"/>
        <dbReference type="ChEBI" id="CHEBI:30616"/>
        <dbReference type="ChEBI" id="CHEBI:33019"/>
        <dbReference type="ChEBI" id="CHEBI:57464"/>
        <dbReference type="ChEBI" id="CHEBI:58115"/>
        <dbReference type="ChEBI" id="CHEBI:58359"/>
        <dbReference type="ChEBI" id="CHEBI:456215"/>
        <dbReference type="EC" id="6.3.5.2"/>
    </reaction>
</comment>
<comment type="pathway">
    <text evidence="1">Purine metabolism; GMP biosynthesis; GMP from XMP (L-Gln route): step 1/1.</text>
</comment>
<feature type="chain" id="PRO_0000140216" description="GMP synthase [glutamine-hydrolyzing]">
    <location>
        <begin position="1"/>
        <end position="505"/>
    </location>
</feature>
<feature type="domain" description="Glutamine amidotransferase type-1" evidence="1">
    <location>
        <begin position="3"/>
        <end position="190"/>
    </location>
</feature>
<feature type="domain" description="GMPS ATP-PPase" evidence="1">
    <location>
        <begin position="191"/>
        <end position="380"/>
    </location>
</feature>
<feature type="active site" description="Nucleophile" evidence="1">
    <location>
        <position position="80"/>
    </location>
</feature>
<feature type="active site" evidence="1">
    <location>
        <position position="164"/>
    </location>
</feature>
<feature type="active site" evidence="1">
    <location>
        <position position="166"/>
    </location>
</feature>
<feature type="binding site" evidence="1">
    <location>
        <begin position="218"/>
        <end position="224"/>
    </location>
    <ligand>
        <name>ATP</name>
        <dbReference type="ChEBI" id="CHEBI:30616"/>
    </ligand>
</feature>
<accession>Q8ZT92</accession>
<proteinExistence type="inferred from homology"/>
<dbReference type="EC" id="6.3.5.2" evidence="1"/>
<dbReference type="EMBL" id="AE009441">
    <property type="protein sequence ID" value="AAL64871.1"/>
    <property type="molecule type" value="Genomic_DNA"/>
</dbReference>
<dbReference type="RefSeq" id="WP_011009338.1">
    <property type="nucleotide sequence ID" value="NC_003364.1"/>
</dbReference>
<dbReference type="SMR" id="Q8ZT92"/>
<dbReference type="FunCoup" id="Q8ZT92">
    <property type="interactions" value="289"/>
</dbReference>
<dbReference type="STRING" id="178306.PAE3369"/>
<dbReference type="MEROPS" id="C26.957"/>
<dbReference type="EnsemblBacteria" id="AAL64871">
    <property type="protein sequence ID" value="AAL64871"/>
    <property type="gene ID" value="PAE3369"/>
</dbReference>
<dbReference type="GeneID" id="1464064"/>
<dbReference type="KEGG" id="pai:PAE3369"/>
<dbReference type="PATRIC" id="fig|178306.9.peg.2536"/>
<dbReference type="eggNOG" id="arCOG00085">
    <property type="taxonomic scope" value="Archaea"/>
</dbReference>
<dbReference type="HOGENOM" id="CLU_014340_0_5_2"/>
<dbReference type="InParanoid" id="Q8ZT92"/>
<dbReference type="UniPathway" id="UPA00189">
    <property type="reaction ID" value="UER00296"/>
</dbReference>
<dbReference type="Proteomes" id="UP000002439">
    <property type="component" value="Chromosome"/>
</dbReference>
<dbReference type="GO" id="GO:0005829">
    <property type="term" value="C:cytosol"/>
    <property type="evidence" value="ECO:0000318"/>
    <property type="project" value="GO_Central"/>
</dbReference>
<dbReference type="GO" id="GO:0005524">
    <property type="term" value="F:ATP binding"/>
    <property type="evidence" value="ECO:0007669"/>
    <property type="project" value="UniProtKB-UniRule"/>
</dbReference>
<dbReference type="GO" id="GO:0003921">
    <property type="term" value="F:GMP synthase activity"/>
    <property type="evidence" value="ECO:0000318"/>
    <property type="project" value="GO_Central"/>
</dbReference>
<dbReference type="GO" id="GO:0006177">
    <property type="term" value="P:GMP biosynthetic process"/>
    <property type="evidence" value="ECO:0000318"/>
    <property type="project" value="GO_Central"/>
</dbReference>
<dbReference type="CDD" id="cd01742">
    <property type="entry name" value="GATase1_GMP_Synthase"/>
    <property type="match status" value="1"/>
</dbReference>
<dbReference type="CDD" id="cd01997">
    <property type="entry name" value="GMP_synthase_C"/>
    <property type="match status" value="1"/>
</dbReference>
<dbReference type="FunFam" id="3.30.300.10:FF:000002">
    <property type="entry name" value="GMP synthase [glutamine-hydrolyzing]"/>
    <property type="match status" value="1"/>
</dbReference>
<dbReference type="FunFam" id="3.40.50.880:FF:000001">
    <property type="entry name" value="GMP synthase [glutamine-hydrolyzing]"/>
    <property type="match status" value="1"/>
</dbReference>
<dbReference type="FunFam" id="3.40.50.620:FF:000646">
    <property type="entry name" value="GMP synthase, large subunit"/>
    <property type="match status" value="1"/>
</dbReference>
<dbReference type="Gene3D" id="3.30.300.10">
    <property type="match status" value="1"/>
</dbReference>
<dbReference type="Gene3D" id="3.40.50.880">
    <property type="match status" value="1"/>
</dbReference>
<dbReference type="Gene3D" id="3.40.50.620">
    <property type="entry name" value="HUPs"/>
    <property type="match status" value="1"/>
</dbReference>
<dbReference type="HAMAP" id="MF_00344">
    <property type="entry name" value="GMP_synthase"/>
    <property type="match status" value="1"/>
</dbReference>
<dbReference type="InterPro" id="IPR029062">
    <property type="entry name" value="Class_I_gatase-like"/>
</dbReference>
<dbReference type="InterPro" id="IPR017926">
    <property type="entry name" value="GATASE"/>
</dbReference>
<dbReference type="InterPro" id="IPR001674">
    <property type="entry name" value="GMP_synth_C"/>
</dbReference>
<dbReference type="InterPro" id="IPR004739">
    <property type="entry name" value="GMP_synth_GATase"/>
</dbReference>
<dbReference type="InterPro" id="IPR022955">
    <property type="entry name" value="GMP_synthase"/>
</dbReference>
<dbReference type="InterPro" id="IPR025777">
    <property type="entry name" value="GMPS_ATP_PPase_dom"/>
</dbReference>
<dbReference type="InterPro" id="IPR022310">
    <property type="entry name" value="NAD/GMP_synthase"/>
</dbReference>
<dbReference type="InterPro" id="IPR014729">
    <property type="entry name" value="Rossmann-like_a/b/a_fold"/>
</dbReference>
<dbReference type="NCBIfam" id="TIGR00884">
    <property type="entry name" value="guaA_Cterm"/>
    <property type="match status" value="1"/>
</dbReference>
<dbReference type="NCBIfam" id="TIGR00888">
    <property type="entry name" value="guaA_Nterm"/>
    <property type="match status" value="1"/>
</dbReference>
<dbReference type="NCBIfam" id="NF000848">
    <property type="entry name" value="PRK00074.1"/>
    <property type="match status" value="1"/>
</dbReference>
<dbReference type="PANTHER" id="PTHR11922:SF2">
    <property type="entry name" value="GMP SYNTHASE [GLUTAMINE-HYDROLYZING]"/>
    <property type="match status" value="1"/>
</dbReference>
<dbReference type="PANTHER" id="PTHR11922">
    <property type="entry name" value="GMP SYNTHASE-RELATED"/>
    <property type="match status" value="1"/>
</dbReference>
<dbReference type="Pfam" id="PF00117">
    <property type="entry name" value="GATase"/>
    <property type="match status" value="1"/>
</dbReference>
<dbReference type="Pfam" id="PF00958">
    <property type="entry name" value="GMP_synt_C"/>
    <property type="match status" value="1"/>
</dbReference>
<dbReference type="Pfam" id="PF02540">
    <property type="entry name" value="NAD_synthase"/>
    <property type="match status" value="1"/>
</dbReference>
<dbReference type="PRINTS" id="PR00097">
    <property type="entry name" value="ANTSNTHASEII"/>
</dbReference>
<dbReference type="PRINTS" id="PR00096">
    <property type="entry name" value="GATASE"/>
</dbReference>
<dbReference type="SUPFAM" id="SSF52402">
    <property type="entry name" value="Adenine nucleotide alpha hydrolases-like"/>
    <property type="match status" value="1"/>
</dbReference>
<dbReference type="SUPFAM" id="SSF52317">
    <property type="entry name" value="Class I glutamine amidotransferase-like"/>
    <property type="match status" value="1"/>
</dbReference>
<dbReference type="PROSITE" id="PS51273">
    <property type="entry name" value="GATASE_TYPE_1"/>
    <property type="match status" value="1"/>
</dbReference>
<dbReference type="PROSITE" id="PS51553">
    <property type="entry name" value="GMPS_ATP_PPASE"/>
    <property type="match status" value="1"/>
</dbReference>
<protein>
    <recommendedName>
        <fullName evidence="1">GMP synthase [glutamine-hydrolyzing]</fullName>
        <ecNumber evidence="1">6.3.5.2</ecNumber>
    </recommendedName>
    <alternativeName>
        <fullName evidence="1">GMP synthetase</fullName>
    </alternativeName>
    <alternativeName>
        <fullName evidence="1">Glutamine amidotransferase</fullName>
    </alternativeName>
</protein>
<organism>
    <name type="scientific">Pyrobaculum aerophilum (strain ATCC 51768 / DSM 7523 / JCM 9630 / CIP 104966 / NBRC 100827 / IM2)</name>
    <dbReference type="NCBI Taxonomy" id="178306"/>
    <lineage>
        <taxon>Archaea</taxon>
        <taxon>Thermoproteota</taxon>
        <taxon>Thermoprotei</taxon>
        <taxon>Thermoproteales</taxon>
        <taxon>Thermoproteaceae</taxon>
        <taxon>Pyrobaculum</taxon>
    </lineage>
</organism>
<sequence>MEKVLVVNFGGQYAHLIARRIREVGVYAEIASPEEAVIKASKEEVKAVILSGGPSSVYEPGAPDIDEGIFALSKPVLGICYGHQMIAKKLGGKVERGKGEYGKTIVKILVNDPLFDGWKPEEAVWMSHSDFVEEPPPGFHVLAISENGYIAAMRKGLIYGVQFHPEVHHTSKGRVMFENFLRKIARISDVWRPEDQITRIVEEIRSRVKGGDVIVGVSGGVDSTVTAVLLYKAVGQRVKAVFIDHGLFREGEPEEAASLLKSIGIDVVYIDAKERFLKRLEGVADCEEKRRIIGETFAEVFSDAVKQMPNVKYLAQGTLYPDVVESGAVKGADKIKSHHNVGGLPPWFQLELIEPLREFYKDEVRRIAKALGLPEDVVYRHPFPGPGLAVRIIGPFTREKLAIVRKATKIVEEELRKAGLFRKVWQAFATVGEDKWVGVKGDRRAMGYIVTVRIVESEDAMTADWSRIPFEILEKISSRITSEIPEVTMVTYAVTSKPPSTIEPC</sequence>
<name>GUAA_PYRAE</name>
<reference key="1">
    <citation type="journal article" date="2002" name="Proc. Natl. Acad. Sci. U.S.A.">
        <title>Genome sequence of the hyperthermophilic crenarchaeon Pyrobaculum aerophilum.</title>
        <authorList>
            <person name="Fitz-Gibbon S.T."/>
            <person name="Ladner H."/>
            <person name="Kim U.-J."/>
            <person name="Stetter K.O."/>
            <person name="Simon M.I."/>
            <person name="Miller J.H."/>
        </authorList>
    </citation>
    <scope>NUCLEOTIDE SEQUENCE [LARGE SCALE GENOMIC DNA]</scope>
    <source>
        <strain>ATCC 51768 / DSM 7523 / JCM 9630 / CIP 104966 / NBRC 100827 / IM2</strain>
    </source>
</reference>
<keyword id="KW-0067">ATP-binding</keyword>
<keyword id="KW-0315">Glutamine amidotransferase</keyword>
<keyword id="KW-0332">GMP biosynthesis</keyword>
<keyword id="KW-0436">Ligase</keyword>
<keyword id="KW-0547">Nucleotide-binding</keyword>
<keyword id="KW-0658">Purine biosynthesis</keyword>
<keyword id="KW-1185">Reference proteome</keyword>